<protein>
    <recommendedName>
        <fullName evidence="1">Septation ring formation regulator EzrA</fullName>
    </recommendedName>
</protein>
<dbReference type="EMBL" id="CP000002">
    <property type="protein sequence ID" value="AAU24609.1"/>
    <property type="molecule type" value="Genomic_DNA"/>
</dbReference>
<dbReference type="EMBL" id="AE017333">
    <property type="protein sequence ID" value="AAU41967.1"/>
    <property type="molecule type" value="Genomic_DNA"/>
</dbReference>
<dbReference type="RefSeq" id="WP_003184408.1">
    <property type="nucleotide sequence ID" value="NC_006322.1"/>
</dbReference>
<dbReference type="SMR" id="Q65G47"/>
<dbReference type="STRING" id="279010.BL00433"/>
<dbReference type="GeneID" id="92860305"/>
<dbReference type="KEGG" id="bld:BLi03105"/>
<dbReference type="KEGG" id="bli:BL00433"/>
<dbReference type="eggNOG" id="COG4477">
    <property type="taxonomic scope" value="Bacteria"/>
</dbReference>
<dbReference type="HOGENOM" id="CLU_034079_1_0_9"/>
<dbReference type="Proteomes" id="UP000000606">
    <property type="component" value="Chromosome"/>
</dbReference>
<dbReference type="GO" id="GO:0005886">
    <property type="term" value="C:plasma membrane"/>
    <property type="evidence" value="ECO:0007669"/>
    <property type="project" value="UniProtKB-SubCell"/>
</dbReference>
<dbReference type="GO" id="GO:0005940">
    <property type="term" value="C:septin ring"/>
    <property type="evidence" value="ECO:0007669"/>
    <property type="project" value="InterPro"/>
</dbReference>
<dbReference type="GO" id="GO:0000917">
    <property type="term" value="P:division septum assembly"/>
    <property type="evidence" value="ECO:0007669"/>
    <property type="project" value="UniProtKB-KW"/>
</dbReference>
<dbReference type="GO" id="GO:0000921">
    <property type="term" value="P:septin ring assembly"/>
    <property type="evidence" value="ECO:0007669"/>
    <property type="project" value="InterPro"/>
</dbReference>
<dbReference type="HAMAP" id="MF_00728">
    <property type="entry name" value="EzrA"/>
    <property type="match status" value="1"/>
</dbReference>
<dbReference type="InterPro" id="IPR010379">
    <property type="entry name" value="EzrA"/>
</dbReference>
<dbReference type="NCBIfam" id="NF003413">
    <property type="entry name" value="PRK04778.1-7"/>
    <property type="match status" value="1"/>
</dbReference>
<dbReference type="Pfam" id="PF06160">
    <property type="entry name" value="EzrA"/>
    <property type="match status" value="1"/>
</dbReference>
<dbReference type="SUPFAM" id="SSF109775">
    <property type="entry name" value="Mannose-6-phosphate receptor binding protein 1 (Tip47), C-terminal domain"/>
    <property type="match status" value="1"/>
</dbReference>
<proteinExistence type="inferred from homology"/>
<sequence>MEFVIGLLALFLILFATGYLFRKNIYKEIDRLEAWKIEIMNRSIVEEMSKIKHLKMTGQTEEFFERWRREWDEIVTSHMPKVEELLFEAEDCADKYRFQKSKQVLAHIENLLSAAESNIEDILKEIADLVSSEEQNRKEIEEVKERYTKVRKNLLAYSHLYGDLYAKIEADLDTVWEGIKQFEEETEGGNYIEARKVLLAQDRLLEELQSYIDDVPKLLASCKQTVPQEIAKLKAGYQEMIDKGYKLDHIQVEKELENLLKELKRAEDALLDELDLEEAAAIVQIIDETIQTLYNQLEHEVEAGQEILGKVPELAAALEKLEASKKDTEAETELVKKGYRLTTGELEKQQSYEKRLEMIEKQFEQVRERLDQKHVAYSLLKEELADIEKQMEAAQREHDEYRDMLQMLRKEELQARELLKQLKQTIKDTARSLEKSNVPGIPEAITEKIRQSQTTVQKVTEQLNELPLNMDAVNERLQEAEQLVTEVKTKTDELVELVLLIERIIQYGNRFRSQDRILSEQLKEAENCFYAYQYEEAYDIAARAVEKASPGAVARLEADAKQPE</sequence>
<accession>Q65G47</accession>
<accession>Q62RK1</accession>
<keyword id="KW-0131">Cell cycle</keyword>
<keyword id="KW-0132">Cell division</keyword>
<keyword id="KW-1003">Cell membrane</keyword>
<keyword id="KW-0175">Coiled coil</keyword>
<keyword id="KW-0472">Membrane</keyword>
<keyword id="KW-1185">Reference proteome</keyword>
<keyword id="KW-0717">Septation</keyword>
<keyword id="KW-0812">Transmembrane</keyword>
<keyword id="KW-1133">Transmembrane helix</keyword>
<organism>
    <name type="scientific">Bacillus licheniformis (strain ATCC 14580 / DSM 13 / JCM 2505 / CCUG 7422 / NBRC 12200 / NCIMB 9375 / NCTC 10341 / NRRL NRS-1264 / Gibson 46)</name>
    <dbReference type="NCBI Taxonomy" id="279010"/>
    <lineage>
        <taxon>Bacteria</taxon>
        <taxon>Bacillati</taxon>
        <taxon>Bacillota</taxon>
        <taxon>Bacilli</taxon>
        <taxon>Bacillales</taxon>
        <taxon>Bacillaceae</taxon>
        <taxon>Bacillus</taxon>
    </lineage>
</organism>
<evidence type="ECO:0000255" key="1">
    <source>
        <dbReference type="HAMAP-Rule" id="MF_00728"/>
    </source>
</evidence>
<reference key="1">
    <citation type="journal article" date="2004" name="J. Mol. Microbiol. Biotechnol.">
        <title>The complete genome sequence of Bacillus licheniformis DSM13, an organism with great industrial potential.</title>
        <authorList>
            <person name="Veith B."/>
            <person name="Herzberg C."/>
            <person name="Steckel S."/>
            <person name="Feesche J."/>
            <person name="Maurer K.H."/>
            <person name="Ehrenreich P."/>
            <person name="Baeumer S."/>
            <person name="Henne A."/>
            <person name="Liesegang H."/>
            <person name="Merkl R."/>
            <person name="Ehrenreich A."/>
            <person name="Gottschalk G."/>
        </authorList>
    </citation>
    <scope>NUCLEOTIDE SEQUENCE [LARGE SCALE GENOMIC DNA]</scope>
    <source>
        <strain>ATCC 14580 / DSM 13 / JCM 2505 / CCUG 7422 / NBRC 12200 / NCIMB 9375 / NCTC 10341 / NRRL NRS-1264 / Gibson 46</strain>
    </source>
</reference>
<reference key="2">
    <citation type="journal article" date="2004" name="Genome Biol.">
        <title>Complete genome sequence of the industrial bacterium Bacillus licheniformis and comparisons with closely related Bacillus species.</title>
        <authorList>
            <person name="Rey M.W."/>
            <person name="Ramaiya P."/>
            <person name="Nelson B.A."/>
            <person name="Brody-Karpin S.D."/>
            <person name="Zaretsky E.J."/>
            <person name="Tang M."/>
            <person name="Lopez de Leon A."/>
            <person name="Xiang H."/>
            <person name="Gusti V."/>
            <person name="Clausen I.G."/>
            <person name="Olsen P.B."/>
            <person name="Rasmussen M.D."/>
            <person name="Andersen J.T."/>
            <person name="Joergensen P.L."/>
            <person name="Larsen T.S."/>
            <person name="Sorokin A."/>
            <person name="Bolotin A."/>
            <person name="Lapidus A."/>
            <person name="Galleron N."/>
            <person name="Ehrlich S.D."/>
            <person name="Berka R.M."/>
        </authorList>
    </citation>
    <scope>NUCLEOTIDE SEQUENCE [LARGE SCALE GENOMIC DNA]</scope>
    <source>
        <strain>ATCC 14580 / DSM 13 / JCM 2505 / CCUG 7422 / NBRC 12200 / NCIMB 9375 / NCTC 10341 / NRRL NRS-1264 / Gibson 46</strain>
    </source>
</reference>
<feature type="chain" id="PRO_1000045895" description="Septation ring formation regulator EzrA">
    <location>
        <begin position="1"/>
        <end position="564"/>
    </location>
</feature>
<feature type="topological domain" description="Extracellular" evidence="1">
    <location>
        <begin position="1"/>
        <end position="2"/>
    </location>
</feature>
<feature type="transmembrane region" description="Helical" evidence="1">
    <location>
        <begin position="3"/>
        <end position="21"/>
    </location>
</feature>
<feature type="topological domain" description="Cytoplasmic" evidence="1">
    <location>
        <begin position="22"/>
        <end position="564"/>
    </location>
</feature>
<feature type="coiled-coil region" evidence="1">
    <location>
        <begin position="99"/>
        <end position="159"/>
    </location>
</feature>
<feature type="coiled-coil region" evidence="1">
    <location>
        <begin position="243"/>
        <end position="281"/>
    </location>
</feature>
<feature type="coiled-coil region" evidence="1">
    <location>
        <begin position="310"/>
        <end position="498"/>
    </location>
</feature>
<name>EZRA_BACLD</name>
<gene>
    <name evidence="1" type="primary">ezrA</name>
    <name type="ordered locus">BLi03105</name>
    <name type="ordered locus">BL00433</name>
</gene>
<comment type="function">
    <text evidence="1">Negative regulator of FtsZ ring formation; modulates the frequency and position of FtsZ ring formation. Inhibits FtsZ ring formation at polar sites. Interacts either with FtsZ or with one of its binding partners to promote depolymerization.</text>
</comment>
<comment type="subcellular location">
    <subcellularLocation>
        <location evidence="1">Cell membrane</location>
        <topology evidence="1">Single-pass membrane protein</topology>
    </subcellularLocation>
    <text evidence="1">Colocalized with FtsZ to the nascent septal site.</text>
</comment>
<comment type="similarity">
    <text evidence="1">Belongs to the EzrA family.</text>
</comment>